<proteinExistence type="evidence at transcript level"/>
<keyword id="KW-0325">Glycoprotein</keyword>
<keyword id="KW-0560">Oxidoreductase</keyword>
<keyword id="KW-0575">Peroxidase</keyword>
<keyword id="KW-0964">Secreted</keyword>
<keyword id="KW-0732">Signal</keyword>
<organism>
    <name type="scientific">Dirofilaria immitis</name>
    <name type="common">Canine heartworm</name>
    <dbReference type="NCBI Taxonomy" id="6287"/>
    <lineage>
        <taxon>Eukaryota</taxon>
        <taxon>Metazoa</taxon>
        <taxon>Ecdysozoa</taxon>
        <taxon>Nematoda</taxon>
        <taxon>Chromadorea</taxon>
        <taxon>Rhabditida</taxon>
        <taxon>Spirurina</taxon>
        <taxon>Spiruromorpha</taxon>
        <taxon>Filarioidea</taxon>
        <taxon>Onchocercidae</taxon>
        <taxon>Dirofilaria</taxon>
    </lineage>
</organism>
<dbReference type="EC" id="1.11.1.9"/>
<dbReference type="EMBL" id="U04693">
    <property type="protein sequence ID" value="AAA16224.1"/>
    <property type="molecule type" value="mRNA"/>
</dbReference>
<dbReference type="EMBL" id="U87457">
    <property type="protein sequence ID" value="AAB58573.1"/>
    <property type="molecule type" value="mRNA"/>
</dbReference>
<dbReference type="EMBL" id="U87458">
    <property type="protein sequence ID" value="AAB58574.1"/>
    <property type="molecule type" value="Genomic_DNA"/>
</dbReference>
<dbReference type="SMR" id="P52033"/>
<dbReference type="PeroxiBase" id="3752">
    <property type="entry name" value="DiGPx01"/>
</dbReference>
<dbReference type="GO" id="GO:0005576">
    <property type="term" value="C:extracellular region"/>
    <property type="evidence" value="ECO:0007669"/>
    <property type="project" value="UniProtKB-SubCell"/>
</dbReference>
<dbReference type="GO" id="GO:0004602">
    <property type="term" value="F:glutathione peroxidase activity"/>
    <property type="evidence" value="ECO:0007669"/>
    <property type="project" value="UniProtKB-EC"/>
</dbReference>
<dbReference type="GO" id="GO:0006979">
    <property type="term" value="P:response to oxidative stress"/>
    <property type="evidence" value="ECO:0007669"/>
    <property type="project" value="InterPro"/>
</dbReference>
<dbReference type="CDD" id="cd00340">
    <property type="entry name" value="GSH_Peroxidase"/>
    <property type="match status" value="1"/>
</dbReference>
<dbReference type="FunFam" id="3.40.30.10:FF:000283">
    <property type="entry name" value="Glutathione peroxidase"/>
    <property type="match status" value="1"/>
</dbReference>
<dbReference type="Gene3D" id="3.40.30.10">
    <property type="entry name" value="Glutaredoxin"/>
    <property type="match status" value="1"/>
</dbReference>
<dbReference type="InterPro" id="IPR000889">
    <property type="entry name" value="Glutathione_peroxidase"/>
</dbReference>
<dbReference type="InterPro" id="IPR029759">
    <property type="entry name" value="GPX_AS"/>
</dbReference>
<dbReference type="InterPro" id="IPR029760">
    <property type="entry name" value="GPX_CS"/>
</dbReference>
<dbReference type="InterPro" id="IPR036249">
    <property type="entry name" value="Thioredoxin-like_sf"/>
</dbReference>
<dbReference type="PANTHER" id="PTHR11592">
    <property type="entry name" value="GLUTATHIONE PEROXIDASE"/>
    <property type="match status" value="1"/>
</dbReference>
<dbReference type="PANTHER" id="PTHR11592:SF88">
    <property type="entry name" value="GLUTATHIONE PEROXIDASE-RELATED"/>
    <property type="match status" value="1"/>
</dbReference>
<dbReference type="Pfam" id="PF00255">
    <property type="entry name" value="GSHPx"/>
    <property type="match status" value="1"/>
</dbReference>
<dbReference type="PIRSF" id="PIRSF000303">
    <property type="entry name" value="Glutathion_perox"/>
    <property type="match status" value="1"/>
</dbReference>
<dbReference type="PRINTS" id="PR01011">
    <property type="entry name" value="GLUTPROXDASE"/>
</dbReference>
<dbReference type="SUPFAM" id="SSF52833">
    <property type="entry name" value="Thioredoxin-like"/>
    <property type="match status" value="1"/>
</dbReference>
<dbReference type="PROSITE" id="PS00460">
    <property type="entry name" value="GLUTATHIONE_PEROXID_1"/>
    <property type="match status" value="1"/>
</dbReference>
<dbReference type="PROSITE" id="PS00763">
    <property type="entry name" value="GLUTATHIONE_PEROXID_2"/>
    <property type="match status" value="1"/>
</dbReference>
<dbReference type="PROSITE" id="PS51355">
    <property type="entry name" value="GLUTATHIONE_PEROXID_3"/>
    <property type="match status" value="1"/>
</dbReference>
<reference key="1">
    <citation type="submission" date="1994-01" db="EMBL/GenBank/DDBJ databases">
        <authorList>
            <person name="Venkatakrishnaiah L."/>
            <person name="James E."/>
        </authorList>
    </citation>
    <scope>NUCLEOTIDE SEQUENCE [MRNA]</scope>
</reference>
<reference key="2">
    <citation type="journal article" date="1998" name="Exp. Parasitol.">
        <title>Dirofilaria immitis: molecular cloning and expression of a cDNA encoding a selenium-independent secreted glutathione peroxidase.</title>
        <authorList>
            <person name="Tripp C.A."/>
            <person name="Frank R.S."/>
            <person name="Selkirk M.E."/>
            <person name="Tang L."/>
            <person name="Mika-Grieve M."/>
            <person name="Frank G.R."/>
            <person name="Grieve R.B."/>
        </authorList>
    </citation>
    <scope>NUCLEOTIDE SEQUENCE [GENOMIC DNA / MRNA]</scope>
</reference>
<comment type="catalytic activity">
    <reaction>
        <text>2 glutathione + H2O2 = glutathione disulfide + 2 H2O</text>
        <dbReference type="Rhea" id="RHEA:16833"/>
        <dbReference type="ChEBI" id="CHEBI:15377"/>
        <dbReference type="ChEBI" id="CHEBI:16240"/>
        <dbReference type="ChEBI" id="CHEBI:57925"/>
        <dbReference type="ChEBI" id="CHEBI:58297"/>
        <dbReference type="EC" id="1.11.1.9"/>
    </reaction>
</comment>
<comment type="subunit">
    <text evidence="1">Homotetramer.</text>
</comment>
<comment type="subcellular location">
    <subcellularLocation>
        <location evidence="1">Secreted</location>
        <location evidence="1">Extracellular space</location>
    </subcellularLocation>
</comment>
<comment type="similarity">
    <text evidence="3">Belongs to the glutathione peroxidase family.</text>
</comment>
<name>GPXC_DIRIM</name>
<sequence>MFIQLLILSYAILLQLIATQVADKQLPNLTKQCEPTSQTIYDFHVPTLDGSEKSLAEYRGKVLLLVNVATYCAYTFQYNDFNPMLENNSNGTLKILAFPCNQFLLQEPAENHELLNGLKYVRPGNGWEPHGNMHIFGKVEVNGDDHHPLYKFLKEHCPQTVPIIGDRHQLMYNPIGTNDIIWNFEKFLIDKKGHPRYRFHPSAWVQGSVIAPFIDELEREI</sequence>
<feature type="signal peptide" evidence="2">
    <location>
        <begin position="1"/>
        <end position="19"/>
    </location>
</feature>
<feature type="chain" id="PRO_0000013094" description="Glutathione peroxidase">
    <location>
        <begin position="20"/>
        <end position="221"/>
    </location>
</feature>
<feature type="active site" evidence="1">
    <location>
        <position position="72"/>
    </location>
</feature>
<feature type="glycosylation site" description="N-linked (GlcNAc...) asparagine" evidence="2">
    <location>
        <position position="28"/>
    </location>
</feature>
<feature type="glycosylation site" description="N-linked (GlcNAc...) asparagine" evidence="2">
    <location>
        <position position="87"/>
    </location>
</feature>
<feature type="glycosylation site" description="N-linked (GlcNAc...) asparagine" evidence="2">
    <location>
        <position position="90"/>
    </location>
</feature>
<protein>
    <recommendedName>
        <fullName>Glutathione peroxidase</fullName>
        <ecNumber>1.11.1.9</ecNumber>
    </recommendedName>
    <alternativeName>
        <fullName>Di29</fullName>
    </alternativeName>
</protein>
<evidence type="ECO:0000250" key="1"/>
<evidence type="ECO:0000255" key="2"/>
<evidence type="ECO:0000305" key="3"/>
<accession>P52033</accession>